<name>FAF2_BOVIN</name>
<comment type="function">
    <text evidence="2">Plays an important role in endoplasmic reticulum-associated degradation (ERAD) that mediates ubiquitin-dependent degradation of misfolded endoplasmic reticulum proteins. By controlling the steady-state expression of the IGF1R receptor, indirectly regulates the insulin-like growth factor receptor signaling pathway. Involved in inhibition of lipid droplet degradation by binding to phospholipase PNPL2 and inhibiting its activity by promoting dissociation of PNPL2 from its endogenous activator, ABHD5 which inhibits the rate of triacylglycerol hydrolysis. Involved in stress granule disassembly: associates with ubiquitinated G3BP1 in response to heat shock, thereby promoting interaction between ubiquitinated G3BP1 and VCP, followed by G3BP1 extraction from stress granules and stress granule disassembly.</text>
</comment>
<comment type="subunit">
    <text evidence="1 2">Identified in a complex that contains SEL1L, OS9, FAF2/UBXD8, UBE2J1/UBC6E and AUP1 (By similarity). Interacts with YOD1 (By similarity). Interacts (via N-terminus) with UBQLN2 (via C-terminus) (By similarity). Interacts with PNPLA2 and UBAC2 (By similarity). Interacts with ZFAND2B; probably through VCP (By similarity). Interacts with LMBR1L (By similarity).</text>
</comment>
<comment type="subcellular location">
    <subcellularLocation>
        <location evidence="2">Cytoplasm</location>
    </subcellularLocation>
    <subcellularLocation>
        <location evidence="2">Lipid droplet</location>
    </subcellularLocation>
    <subcellularLocation>
        <location evidence="2">Endoplasmic reticulum</location>
    </subcellularLocation>
</comment>
<feature type="initiator methionine" description="Removed" evidence="2">
    <location>
        <position position="1"/>
    </location>
</feature>
<feature type="chain" id="PRO_0000244063" description="FAS-associated factor 2">
    <location>
        <begin position="2"/>
        <end position="445"/>
    </location>
</feature>
<feature type="domain" description="UBA">
    <location>
        <begin position="12"/>
        <end position="48"/>
    </location>
</feature>
<feature type="domain" description="UBX" evidence="4">
    <location>
        <begin position="357"/>
        <end position="439"/>
    </location>
</feature>
<feature type="region of interest" description="Disordered" evidence="5">
    <location>
        <begin position="299"/>
        <end position="361"/>
    </location>
</feature>
<feature type="coiled-coil region" evidence="3">
    <location>
        <begin position="275"/>
        <end position="350"/>
    </location>
</feature>
<feature type="compositionally biased region" description="Basic and acidic residues" evidence="5">
    <location>
        <begin position="303"/>
        <end position="348"/>
    </location>
</feature>
<feature type="modified residue" description="N-acetylalanine" evidence="2">
    <location>
        <position position="2"/>
    </location>
</feature>
<feature type="modified residue" description="N6-acetyllysine" evidence="2">
    <location>
        <position position="167"/>
    </location>
</feature>
<organism>
    <name type="scientific">Bos taurus</name>
    <name type="common">Bovine</name>
    <dbReference type="NCBI Taxonomy" id="9913"/>
    <lineage>
        <taxon>Eukaryota</taxon>
        <taxon>Metazoa</taxon>
        <taxon>Chordata</taxon>
        <taxon>Craniata</taxon>
        <taxon>Vertebrata</taxon>
        <taxon>Euteleostomi</taxon>
        <taxon>Mammalia</taxon>
        <taxon>Eutheria</taxon>
        <taxon>Laurasiatheria</taxon>
        <taxon>Artiodactyla</taxon>
        <taxon>Ruminantia</taxon>
        <taxon>Pecora</taxon>
        <taxon>Bovidae</taxon>
        <taxon>Bovinae</taxon>
        <taxon>Bos</taxon>
    </lineage>
</organism>
<keyword id="KW-0007">Acetylation</keyword>
<keyword id="KW-0175">Coiled coil</keyword>
<keyword id="KW-0963">Cytoplasm</keyword>
<keyword id="KW-0256">Endoplasmic reticulum</keyword>
<keyword id="KW-0551">Lipid droplet</keyword>
<keyword id="KW-1185">Reference proteome</keyword>
<keyword id="KW-0834">Unfolded protein response</keyword>
<evidence type="ECO:0000250" key="1">
    <source>
        <dbReference type="UniProtKB" id="Q3TDN2"/>
    </source>
</evidence>
<evidence type="ECO:0000250" key="2">
    <source>
        <dbReference type="UniProtKB" id="Q96CS3"/>
    </source>
</evidence>
<evidence type="ECO:0000255" key="3"/>
<evidence type="ECO:0000255" key="4">
    <source>
        <dbReference type="PROSITE-ProRule" id="PRU00215"/>
    </source>
</evidence>
<evidence type="ECO:0000256" key="5">
    <source>
        <dbReference type="SAM" id="MobiDB-lite"/>
    </source>
</evidence>
<accession>Q2HJD0</accession>
<reference key="1">
    <citation type="submission" date="2005-09" db="EMBL/GenBank/DDBJ databases">
        <authorList>
            <consortium name="NIH - Mammalian Gene Collection (MGC) project"/>
        </authorList>
    </citation>
    <scope>NUCLEOTIDE SEQUENCE [LARGE SCALE MRNA]</scope>
    <source>
        <strain>Hereford</strain>
        <tissue>Ascending colon</tissue>
    </source>
</reference>
<gene>
    <name type="primary">FAF2</name>
    <name type="synonym">UBXD8</name>
</gene>
<sequence length="445" mass="52664">MAAPEERDLTQEQTEKLLQFQDLTGIESMDQCRHTLEQHNWNIEAAVQDRLNEQEGVPSVFNPPPSRPLQVNTADHRIYSYVVSRPQPRGLLGWGYYLIMLPFRFTYYTILDIFRFALRFIRPDPRNRVTDPVGDIVSFMHSFEEKYGRAHPVFYLGTYSQALNDAKRELRFLLVYLHGDDHQDSDEFCRNTLCAPEVISLINTRMLFWACSTNKPEGYRVSQALRENTYPFLAMIMLKDRRMTVVGRLEGLIQPDDLINQLTFIMDANQTYLVSERLEREERNQTQVLRQQQDEAYLASLRADQEKERKKREERERKRRKEEEVQQQKLAEERRRRNLQEEKERKLECLPPEPSPDDPESVKIIFKLPNDSRVERRFHFSQSLTVIHDFLFSLKESPEKFQIEANFPRRVLPCLPSEEWPNPPTLQEAGLSHTEVLFVQDLTDE</sequence>
<protein>
    <recommendedName>
        <fullName>FAS-associated factor 2</fullName>
    </recommendedName>
    <alternativeName>
        <fullName>UBX domain-containing protein 8</fullName>
    </alternativeName>
</protein>
<dbReference type="EMBL" id="BC105572">
    <property type="protein sequence ID" value="AAI05573.1"/>
    <property type="molecule type" value="mRNA"/>
</dbReference>
<dbReference type="RefSeq" id="NP_001070488.1">
    <property type="nucleotide sequence ID" value="NM_001077020.1"/>
</dbReference>
<dbReference type="BMRB" id="Q2HJD0"/>
<dbReference type="SMR" id="Q2HJD0"/>
<dbReference type="FunCoup" id="Q2HJD0">
    <property type="interactions" value="5379"/>
</dbReference>
<dbReference type="STRING" id="9913.ENSBTAP00000052507"/>
<dbReference type="PaxDb" id="9913-ENSBTAP00000052507"/>
<dbReference type="Ensembl" id="ENSBTAT00000057329.4">
    <property type="protein sequence ID" value="ENSBTAP00000052507.2"/>
    <property type="gene ID" value="ENSBTAG00000017744.7"/>
</dbReference>
<dbReference type="GeneID" id="767948"/>
<dbReference type="KEGG" id="bta:767948"/>
<dbReference type="CTD" id="23197"/>
<dbReference type="VEuPathDB" id="HostDB:ENSBTAG00000017744"/>
<dbReference type="VGNC" id="VGNC:28706">
    <property type="gene designation" value="FAF2"/>
</dbReference>
<dbReference type="eggNOG" id="KOG1363">
    <property type="taxonomic scope" value="Eukaryota"/>
</dbReference>
<dbReference type="GeneTree" id="ENSGT00940000157197"/>
<dbReference type="HOGENOM" id="CLU_047924_0_0_1"/>
<dbReference type="InParanoid" id="Q2HJD0"/>
<dbReference type="OMA" id="ILIRHQW"/>
<dbReference type="OrthoDB" id="1026733at2759"/>
<dbReference type="TreeFam" id="TF314172"/>
<dbReference type="Reactome" id="R-BTA-6798695">
    <property type="pathway name" value="Neutrophil degranulation"/>
</dbReference>
<dbReference type="Reactome" id="R-BTA-8980692">
    <property type="pathway name" value="RHOA GTPase cycle"/>
</dbReference>
<dbReference type="Proteomes" id="UP000009136">
    <property type="component" value="Chromosome 7"/>
</dbReference>
<dbReference type="Bgee" id="ENSBTAG00000017744">
    <property type="expression patterns" value="Expressed in spermatocyte and 107 other cell types or tissues"/>
</dbReference>
<dbReference type="GO" id="GO:0005783">
    <property type="term" value="C:endoplasmic reticulum"/>
    <property type="evidence" value="ECO:0000250"/>
    <property type="project" value="UniProtKB"/>
</dbReference>
<dbReference type="GO" id="GO:0005811">
    <property type="term" value="C:lipid droplet"/>
    <property type="evidence" value="ECO:0007669"/>
    <property type="project" value="UniProtKB-SubCell"/>
</dbReference>
<dbReference type="GO" id="GO:0030674">
    <property type="term" value="F:protein-macromolecule adaptor activity"/>
    <property type="evidence" value="ECO:0000250"/>
    <property type="project" value="UniProtKB"/>
</dbReference>
<dbReference type="GO" id="GO:0043130">
    <property type="term" value="F:ubiquitin binding"/>
    <property type="evidence" value="ECO:0000318"/>
    <property type="project" value="GO_Central"/>
</dbReference>
<dbReference type="GO" id="GO:0036503">
    <property type="term" value="P:ERAD pathway"/>
    <property type="evidence" value="ECO:0000250"/>
    <property type="project" value="UniProtKB"/>
</dbReference>
<dbReference type="GO" id="GO:0006986">
    <property type="term" value="P:response to unfolded protein"/>
    <property type="evidence" value="ECO:0007669"/>
    <property type="project" value="UniProtKB-KW"/>
</dbReference>
<dbReference type="GO" id="GO:0035617">
    <property type="term" value="P:stress granule disassembly"/>
    <property type="evidence" value="ECO:0000250"/>
    <property type="project" value="UniProtKB"/>
</dbReference>
<dbReference type="CDD" id="cd02991">
    <property type="entry name" value="UAS_ETEA"/>
    <property type="match status" value="1"/>
</dbReference>
<dbReference type="CDD" id="cd14414">
    <property type="entry name" value="UBA_FAF2"/>
    <property type="match status" value="1"/>
</dbReference>
<dbReference type="CDD" id="cd16120">
    <property type="entry name" value="UBX_UBXN3B"/>
    <property type="match status" value="1"/>
</dbReference>
<dbReference type="FunFam" id="3.10.20.90:FF:000101">
    <property type="entry name" value="FAS-associated factor 2 isoform X2"/>
    <property type="match status" value="1"/>
</dbReference>
<dbReference type="FunFam" id="3.40.30.10:FF:000066">
    <property type="entry name" value="FAS-associated factor 2 isoform X2"/>
    <property type="match status" value="1"/>
</dbReference>
<dbReference type="FunFam" id="1.10.8.10:FF:000043">
    <property type="entry name" value="Fas-associated factor family member 2"/>
    <property type="match status" value="1"/>
</dbReference>
<dbReference type="Gene3D" id="1.10.8.10">
    <property type="entry name" value="DNA helicase RuvA subunit, C-terminal domain"/>
    <property type="match status" value="1"/>
</dbReference>
<dbReference type="Gene3D" id="3.40.30.10">
    <property type="entry name" value="Glutaredoxin"/>
    <property type="match status" value="1"/>
</dbReference>
<dbReference type="Gene3D" id="3.10.20.90">
    <property type="entry name" value="Phosphatidylinositol 3-kinase Catalytic Subunit, Chain A, domain 1"/>
    <property type="match status" value="1"/>
</dbReference>
<dbReference type="InterPro" id="IPR049483">
    <property type="entry name" value="FAF1_2-like_UAS"/>
</dbReference>
<dbReference type="InterPro" id="IPR036249">
    <property type="entry name" value="Thioredoxin-like_sf"/>
</dbReference>
<dbReference type="InterPro" id="IPR006577">
    <property type="entry name" value="UAS"/>
</dbReference>
<dbReference type="InterPro" id="IPR009060">
    <property type="entry name" value="UBA-like_sf"/>
</dbReference>
<dbReference type="InterPro" id="IPR054109">
    <property type="entry name" value="UBA_8"/>
</dbReference>
<dbReference type="InterPro" id="IPR029071">
    <property type="entry name" value="Ubiquitin-like_domsf"/>
</dbReference>
<dbReference type="InterPro" id="IPR001012">
    <property type="entry name" value="UBX_dom"/>
</dbReference>
<dbReference type="InterPro" id="IPR050730">
    <property type="entry name" value="UBX_domain-protein"/>
</dbReference>
<dbReference type="PANTHER" id="PTHR23322:SF1">
    <property type="entry name" value="FAS-ASSOCIATED FACTOR 2"/>
    <property type="match status" value="1"/>
</dbReference>
<dbReference type="PANTHER" id="PTHR23322">
    <property type="entry name" value="FAS-ASSOCIATED PROTEIN"/>
    <property type="match status" value="1"/>
</dbReference>
<dbReference type="Pfam" id="PF21021">
    <property type="entry name" value="FAF1"/>
    <property type="match status" value="1"/>
</dbReference>
<dbReference type="Pfam" id="PF22566">
    <property type="entry name" value="UBA_8"/>
    <property type="match status" value="1"/>
</dbReference>
<dbReference type="Pfam" id="PF00789">
    <property type="entry name" value="UBX"/>
    <property type="match status" value="1"/>
</dbReference>
<dbReference type="SMART" id="SM00594">
    <property type="entry name" value="UAS"/>
    <property type="match status" value="1"/>
</dbReference>
<dbReference type="SUPFAM" id="SSF52833">
    <property type="entry name" value="Thioredoxin-like"/>
    <property type="match status" value="1"/>
</dbReference>
<dbReference type="SUPFAM" id="SSF46934">
    <property type="entry name" value="UBA-like"/>
    <property type="match status" value="1"/>
</dbReference>
<dbReference type="SUPFAM" id="SSF54236">
    <property type="entry name" value="Ubiquitin-like"/>
    <property type="match status" value="1"/>
</dbReference>
<dbReference type="PROSITE" id="PS50033">
    <property type="entry name" value="UBX"/>
    <property type="match status" value="1"/>
</dbReference>
<proteinExistence type="evidence at transcript level"/>